<keyword id="KW-0496">Mitochondrion</keyword>
<keyword id="KW-0809">Transit peptide</keyword>
<protein>
    <recommendedName>
        <fullName>Altered inheritance of mitochondria protein 41, mitochondrial</fullName>
    </recommendedName>
</protein>
<organism>
    <name type="scientific">Saccharomyces cerevisiae (strain Lalvin EC1118 / Prise de mousse)</name>
    <name type="common">Baker's yeast</name>
    <dbReference type="NCBI Taxonomy" id="643680"/>
    <lineage>
        <taxon>Eukaryota</taxon>
        <taxon>Fungi</taxon>
        <taxon>Dikarya</taxon>
        <taxon>Ascomycota</taxon>
        <taxon>Saccharomycotina</taxon>
        <taxon>Saccharomycetes</taxon>
        <taxon>Saccharomycetales</taxon>
        <taxon>Saccharomycetaceae</taxon>
        <taxon>Saccharomyces</taxon>
    </lineage>
</organism>
<name>AIM41_YEAS8</name>
<gene>
    <name type="primary">AIM41</name>
    <name type="ORF">EC1118_1O4_4401g</name>
</gene>
<proteinExistence type="inferred from homology"/>
<accession>C8ZGX0</accession>
<feature type="transit peptide" description="Mitochondrion" evidence="2">
    <location>
        <begin position="1"/>
        <end position="20"/>
    </location>
</feature>
<feature type="chain" id="PRO_0000399875" description="Altered inheritance of mitochondria protein 41, mitochondrial">
    <location>
        <begin position="21"/>
        <end position="185"/>
    </location>
</feature>
<dbReference type="EMBL" id="FN394216">
    <property type="protein sequence ID" value="CAY86499.1"/>
    <property type="molecule type" value="Genomic_DNA"/>
</dbReference>
<dbReference type="SMR" id="C8ZGX0"/>
<dbReference type="HOGENOM" id="CLU_123460_0_0_1"/>
<dbReference type="OrthoDB" id="4921at4893"/>
<dbReference type="Proteomes" id="UP000000286">
    <property type="component" value="Chromosome XV, Scaffold EC1118_1O4"/>
</dbReference>
<dbReference type="GO" id="GO:0005739">
    <property type="term" value="C:mitochondrion"/>
    <property type="evidence" value="ECO:0007669"/>
    <property type="project" value="UniProtKB-SubCell"/>
</dbReference>
<dbReference type="GO" id="GO:0016884">
    <property type="term" value="F:carbon-nitrogen ligase activity, with glutamine as amido-N-donor"/>
    <property type="evidence" value="ECO:0007669"/>
    <property type="project" value="InterPro"/>
</dbReference>
<dbReference type="FunFam" id="1.10.1510.10:FF:000002">
    <property type="entry name" value="Altered inheritance of mitochondria protein 41, mitochondrial"/>
    <property type="match status" value="1"/>
</dbReference>
<dbReference type="Gene3D" id="1.10.1510.10">
    <property type="entry name" value="Uncharacterised protein YqeY/AIM41 PF09424, N-terminal domain"/>
    <property type="match status" value="1"/>
</dbReference>
<dbReference type="InterPro" id="IPR003789">
    <property type="entry name" value="Asn/Gln_tRNA_amidoTrase-B-like"/>
</dbReference>
<dbReference type="InterPro" id="IPR019004">
    <property type="entry name" value="YqeY/Aim41"/>
</dbReference>
<dbReference type="InterPro" id="IPR042184">
    <property type="entry name" value="YqeY/Aim41_N"/>
</dbReference>
<dbReference type="PANTHER" id="PTHR28055">
    <property type="entry name" value="ALTERED INHERITANCE OF MITOCHONDRIA PROTEIN 41, MITOCHONDRIAL"/>
    <property type="match status" value="1"/>
</dbReference>
<dbReference type="PANTHER" id="PTHR28055:SF1">
    <property type="entry name" value="ALTERED INHERITANCE OF MITOCHONDRIA PROTEIN 41, MITOCHONDRIAL"/>
    <property type="match status" value="1"/>
</dbReference>
<dbReference type="Pfam" id="PF09424">
    <property type="entry name" value="YqeY"/>
    <property type="match status" value="1"/>
</dbReference>
<dbReference type="SUPFAM" id="SSF89095">
    <property type="entry name" value="GatB/YqeY motif"/>
    <property type="match status" value="1"/>
</dbReference>
<evidence type="ECO:0000250" key="1"/>
<evidence type="ECO:0000255" key="2"/>
<evidence type="ECO:0000305" key="3"/>
<reference key="1">
    <citation type="journal article" date="2009" name="Proc. Natl. Acad. Sci. U.S.A.">
        <title>Eukaryote-to-eukaryote gene transfer events revealed by the genome sequence of the wine yeast Saccharomyces cerevisiae EC1118.</title>
        <authorList>
            <person name="Novo M."/>
            <person name="Bigey F."/>
            <person name="Beyne E."/>
            <person name="Galeote V."/>
            <person name="Gavory F."/>
            <person name="Mallet S."/>
            <person name="Cambon B."/>
            <person name="Legras J.-L."/>
            <person name="Wincker P."/>
            <person name="Casaregola S."/>
            <person name="Dequin S."/>
        </authorList>
    </citation>
    <scope>NUCLEOTIDE SEQUENCE [LARGE SCALE GENOMIC DNA]</scope>
    <source>
        <strain>Lalvin EC1118 / Prise de mousse</strain>
    </source>
</reference>
<comment type="subcellular location">
    <subcellularLocation>
        <location evidence="1">Mitochondrion</location>
    </subcellularLocation>
</comment>
<comment type="similarity">
    <text evidence="3">Belongs to the AIM41 family.</text>
</comment>
<sequence>MFRQSIRPLVSNRLTFIRYNSSPAYTAAVSLLKGDLKKAMIAKDEMKKTAIRSMLSAIKNKEIALKGKSADEYSLYDMYSKLISQRKDSINEFLANKRDDLVAKEQGEMDIIKKYMDQLPVSSELDIDQNVKKLLDALKTKAGEKKVQIKEIMGEIDWKSLPTEWKTSPTAIKNSIVKQFKEIFK</sequence>